<keyword id="KW-1185">Reference proteome</keyword>
<keyword id="KW-0687">Ribonucleoprotein</keyword>
<keyword id="KW-0689">Ribosomal protein</keyword>
<name>RL35_BORPE</name>
<evidence type="ECO:0000255" key="1">
    <source>
        <dbReference type="HAMAP-Rule" id="MF_00514"/>
    </source>
</evidence>
<evidence type="ECO:0000256" key="2">
    <source>
        <dbReference type="SAM" id="MobiDB-lite"/>
    </source>
</evidence>
<evidence type="ECO:0000305" key="3"/>
<dbReference type="EMBL" id="BX640418">
    <property type="protein sequence ID" value="CAE42851.1"/>
    <property type="molecule type" value="Genomic_DNA"/>
</dbReference>
<dbReference type="RefSeq" id="NP_881203.1">
    <property type="nucleotide sequence ID" value="NC_002929.2"/>
</dbReference>
<dbReference type="RefSeq" id="WP_003812834.1">
    <property type="nucleotide sequence ID" value="NZ_CP039022.1"/>
</dbReference>
<dbReference type="SMR" id="Q7VVR2"/>
<dbReference type="STRING" id="257313.BP2576"/>
<dbReference type="PaxDb" id="257313-BP2576"/>
<dbReference type="GeneID" id="93204379"/>
<dbReference type="KEGG" id="bpe:BP2576"/>
<dbReference type="PATRIC" id="fig|257313.5.peg.2777"/>
<dbReference type="eggNOG" id="COG0291">
    <property type="taxonomic scope" value="Bacteria"/>
</dbReference>
<dbReference type="HOGENOM" id="CLU_169643_1_0_4"/>
<dbReference type="Proteomes" id="UP000002676">
    <property type="component" value="Chromosome"/>
</dbReference>
<dbReference type="GO" id="GO:0022625">
    <property type="term" value="C:cytosolic large ribosomal subunit"/>
    <property type="evidence" value="ECO:0007669"/>
    <property type="project" value="TreeGrafter"/>
</dbReference>
<dbReference type="GO" id="GO:0003735">
    <property type="term" value="F:structural constituent of ribosome"/>
    <property type="evidence" value="ECO:0007669"/>
    <property type="project" value="InterPro"/>
</dbReference>
<dbReference type="GO" id="GO:0006412">
    <property type="term" value="P:translation"/>
    <property type="evidence" value="ECO:0007669"/>
    <property type="project" value="UniProtKB-UniRule"/>
</dbReference>
<dbReference type="FunFam" id="4.10.410.60:FF:000001">
    <property type="entry name" value="50S ribosomal protein L35"/>
    <property type="match status" value="1"/>
</dbReference>
<dbReference type="Gene3D" id="4.10.410.60">
    <property type="match status" value="1"/>
</dbReference>
<dbReference type="HAMAP" id="MF_00514">
    <property type="entry name" value="Ribosomal_bL35"/>
    <property type="match status" value="1"/>
</dbReference>
<dbReference type="InterPro" id="IPR001706">
    <property type="entry name" value="Ribosomal_bL35"/>
</dbReference>
<dbReference type="InterPro" id="IPR021137">
    <property type="entry name" value="Ribosomal_bL35-like"/>
</dbReference>
<dbReference type="InterPro" id="IPR018265">
    <property type="entry name" value="Ribosomal_bL35_CS"/>
</dbReference>
<dbReference type="InterPro" id="IPR037229">
    <property type="entry name" value="Ribosomal_bL35_sf"/>
</dbReference>
<dbReference type="NCBIfam" id="TIGR00001">
    <property type="entry name" value="rpmI_bact"/>
    <property type="match status" value="1"/>
</dbReference>
<dbReference type="PANTHER" id="PTHR33343">
    <property type="entry name" value="54S RIBOSOMAL PROTEIN BL35M"/>
    <property type="match status" value="1"/>
</dbReference>
<dbReference type="PANTHER" id="PTHR33343:SF1">
    <property type="entry name" value="LARGE RIBOSOMAL SUBUNIT PROTEIN BL35M"/>
    <property type="match status" value="1"/>
</dbReference>
<dbReference type="Pfam" id="PF01632">
    <property type="entry name" value="Ribosomal_L35p"/>
    <property type="match status" value="1"/>
</dbReference>
<dbReference type="PRINTS" id="PR00064">
    <property type="entry name" value="RIBOSOMALL35"/>
</dbReference>
<dbReference type="SUPFAM" id="SSF143034">
    <property type="entry name" value="L35p-like"/>
    <property type="match status" value="1"/>
</dbReference>
<dbReference type="PROSITE" id="PS00936">
    <property type="entry name" value="RIBOSOMAL_L35"/>
    <property type="match status" value="1"/>
</dbReference>
<accession>Q7VVR2</accession>
<reference key="1">
    <citation type="journal article" date="2003" name="Nat. Genet.">
        <title>Comparative analysis of the genome sequences of Bordetella pertussis, Bordetella parapertussis and Bordetella bronchiseptica.</title>
        <authorList>
            <person name="Parkhill J."/>
            <person name="Sebaihia M."/>
            <person name="Preston A."/>
            <person name="Murphy L.D."/>
            <person name="Thomson N.R."/>
            <person name="Harris D.E."/>
            <person name="Holden M.T.G."/>
            <person name="Churcher C.M."/>
            <person name="Bentley S.D."/>
            <person name="Mungall K.L."/>
            <person name="Cerdeno-Tarraga A.-M."/>
            <person name="Temple L."/>
            <person name="James K.D."/>
            <person name="Harris B."/>
            <person name="Quail M.A."/>
            <person name="Achtman M."/>
            <person name="Atkin R."/>
            <person name="Baker S."/>
            <person name="Basham D."/>
            <person name="Bason N."/>
            <person name="Cherevach I."/>
            <person name="Chillingworth T."/>
            <person name="Collins M."/>
            <person name="Cronin A."/>
            <person name="Davis P."/>
            <person name="Doggett J."/>
            <person name="Feltwell T."/>
            <person name="Goble A."/>
            <person name="Hamlin N."/>
            <person name="Hauser H."/>
            <person name="Holroyd S."/>
            <person name="Jagels K."/>
            <person name="Leather S."/>
            <person name="Moule S."/>
            <person name="Norberczak H."/>
            <person name="O'Neil S."/>
            <person name="Ormond D."/>
            <person name="Price C."/>
            <person name="Rabbinowitsch E."/>
            <person name="Rutter S."/>
            <person name="Sanders M."/>
            <person name="Saunders D."/>
            <person name="Seeger K."/>
            <person name="Sharp S."/>
            <person name="Simmonds M."/>
            <person name="Skelton J."/>
            <person name="Squares R."/>
            <person name="Squares S."/>
            <person name="Stevens K."/>
            <person name="Unwin L."/>
            <person name="Whitehead S."/>
            <person name="Barrell B.G."/>
            <person name="Maskell D.J."/>
        </authorList>
    </citation>
    <scope>NUCLEOTIDE SEQUENCE [LARGE SCALE GENOMIC DNA]</scope>
    <source>
        <strain>Tohama I / ATCC BAA-589 / NCTC 13251</strain>
    </source>
</reference>
<protein>
    <recommendedName>
        <fullName evidence="1">Large ribosomal subunit protein bL35</fullName>
    </recommendedName>
    <alternativeName>
        <fullName evidence="3">50S ribosomal protein L35</fullName>
    </alternativeName>
</protein>
<organism>
    <name type="scientific">Bordetella pertussis (strain Tohama I / ATCC BAA-589 / NCTC 13251)</name>
    <dbReference type="NCBI Taxonomy" id="257313"/>
    <lineage>
        <taxon>Bacteria</taxon>
        <taxon>Pseudomonadati</taxon>
        <taxon>Pseudomonadota</taxon>
        <taxon>Betaproteobacteria</taxon>
        <taxon>Burkholderiales</taxon>
        <taxon>Alcaligenaceae</taxon>
        <taxon>Bordetella</taxon>
    </lineage>
</organism>
<gene>
    <name evidence="1" type="primary">rpmI</name>
    <name type="ordered locus">BP2576</name>
</gene>
<sequence>MPKMKTKKSAAKRFKVRGSGSIKRGQAFKRHILTKKTTKNKRQLRGSAAVHETNVASVKAMMPFA</sequence>
<comment type="similarity">
    <text evidence="1">Belongs to the bacterial ribosomal protein bL35 family.</text>
</comment>
<feature type="chain" id="PRO_0000177335" description="Large ribosomal subunit protein bL35">
    <location>
        <begin position="1"/>
        <end position="65"/>
    </location>
</feature>
<feature type="region of interest" description="Disordered" evidence="2">
    <location>
        <begin position="1"/>
        <end position="25"/>
    </location>
</feature>
<feature type="compositionally biased region" description="Basic residues" evidence="2">
    <location>
        <begin position="1"/>
        <end position="16"/>
    </location>
</feature>
<proteinExistence type="inferred from homology"/>